<name>Y148_CAMJE</name>
<feature type="chain" id="PRO_0000167338" description="UPF0102 protein Cj0148c">
    <location>
        <begin position="1"/>
        <end position="112"/>
    </location>
</feature>
<accession>Q9PIX9</accession>
<accession>Q0PBY9</accession>
<gene>
    <name type="ordered locus">Cj0148c</name>
</gene>
<comment type="similarity">
    <text evidence="1">Belongs to the UPF0102 family.</text>
</comment>
<evidence type="ECO:0000305" key="1"/>
<sequence>MGVKAYLDGILGEDKACKFLKKQGFEILKRNFHSKFGEIDIIAKKDEILHFIEVKFTQNDYEVSERLDRKKLEKILKTIEFYHLKNGISSDFQIDLICIKNDVIQFCENISF</sequence>
<dbReference type="EMBL" id="AL111168">
    <property type="protein sequence ID" value="CAL34319.1"/>
    <property type="molecule type" value="Genomic_DNA"/>
</dbReference>
<dbReference type="PIR" id="D81432">
    <property type="entry name" value="D81432"/>
</dbReference>
<dbReference type="RefSeq" id="WP_002851874.1">
    <property type="nucleotide sequence ID" value="NZ_SZUC01000006.1"/>
</dbReference>
<dbReference type="RefSeq" id="YP_002343608.1">
    <property type="nucleotide sequence ID" value="NC_002163.1"/>
</dbReference>
<dbReference type="SMR" id="Q9PIX9"/>
<dbReference type="IntAct" id="Q9PIX9">
    <property type="interactions" value="31"/>
</dbReference>
<dbReference type="STRING" id="192222.Cj0148c"/>
<dbReference type="PaxDb" id="192222-Cj0148c"/>
<dbReference type="EnsemblBacteria" id="CAL34319">
    <property type="protein sequence ID" value="CAL34319"/>
    <property type="gene ID" value="Cj0148c"/>
</dbReference>
<dbReference type="GeneID" id="904489"/>
<dbReference type="KEGG" id="cje:Cj0148c"/>
<dbReference type="PATRIC" id="fig|192222.6.peg.146"/>
<dbReference type="eggNOG" id="COG0792">
    <property type="taxonomic scope" value="Bacteria"/>
</dbReference>
<dbReference type="HOGENOM" id="CLU_115353_3_2_7"/>
<dbReference type="OrthoDB" id="9794876at2"/>
<dbReference type="Proteomes" id="UP000000799">
    <property type="component" value="Chromosome"/>
</dbReference>
<dbReference type="GO" id="GO:0003676">
    <property type="term" value="F:nucleic acid binding"/>
    <property type="evidence" value="ECO:0007669"/>
    <property type="project" value="InterPro"/>
</dbReference>
<dbReference type="Gene3D" id="3.40.1350.10">
    <property type="match status" value="1"/>
</dbReference>
<dbReference type="HAMAP" id="MF_00048">
    <property type="entry name" value="UPF0102"/>
    <property type="match status" value="1"/>
</dbReference>
<dbReference type="InterPro" id="IPR011335">
    <property type="entry name" value="Restrct_endonuc-II-like"/>
</dbReference>
<dbReference type="InterPro" id="IPR011856">
    <property type="entry name" value="tRNA_endonuc-like_dom_sf"/>
</dbReference>
<dbReference type="InterPro" id="IPR003509">
    <property type="entry name" value="UPF0102_YraN-like"/>
</dbReference>
<dbReference type="NCBIfam" id="NF009152">
    <property type="entry name" value="PRK12497.2-4"/>
    <property type="match status" value="1"/>
</dbReference>
<dbReference type="PANTHER" id="PTHR34039">
    <property type="entry name" value="UPF0102 PROTEIN YRAN"/>
    <property type="match status" value="1"/>
</dbReference>
<dbReference type="PANTHER" id="PTHR34039:SF1">
    <property type="entry name" value="UPF0102 PROTEIN YRAN"/>
    <property type="match status" value="1"/>
</dbReference>
<dbReference type="Pfam" id="PF02021">
    <property type="entry name" value="UPF0102"/>
    <property type="match status" value="1"/>
</dbReference>
<dbReference type="SUPFAM" id="SSF52980">
    <property type="entry name" value="Restriction endonuclease-like"/>
    <property type="match status" value="1"/>
</dbReference>
<protein>
    <recommendedName>
        <fullName>UPF0102 protein Cj0148c</fullName>
    </recommendedName>
</protein>
<reference key="1">
    <citation type="journal article" date="2000" name="Nature">
        <title>The genome sequence of the food-borne pathogen Campylobacter jejuni reveals hypervariable sequences.</title>
        <authorList>
            <person name="Parkhill J."/>
            <person name="Wren B.W."/>
            <person name="Mungall K.L."/>
            <person name="Ketley J.M."/>
            <person name="Churcher C.M."/>
            <person name="Basham D."/>
            <person name="Chillingworth T."/>
            <person name="Davies R.M."/>
            <person name="Feltwell T."/>
            <person name="Holroyd S."/>
            <person name="Jagels K."/>
            <person name="Karlyshev A.V."/>
            <person name="Moule S."/>
            <person name="Pallen M.J."/>
            <person name="Penn C.W."/>
            <person name="Quail M.A."/>
            <person name="Rajandream M.A."/>
            <person name="Rutherford K.M."/>
            <person name="van Vliet A.H.M."/>
            <person name="Whitehead S."/>
            <person name="Barrell B.G."/>
        </authorList>
    </citation>
    <scope>NUCLEOTIDE SEQUENCE [LARGE SCALE GENOMIC DNA]</scope>
    <source>
        <strain>ATCC 700819 / NCTC 11168</strain>
    </source>
</reference>
<organism>
    <name type="scientific">Campylobacter jejuni subsp. jejuni serotype O:2 (strain ATCC 700819 / NCTC 11168)</name>
    <dbReference type="NCBI Taxonomy" id="192222"/>
    <lineage>
        <taxon>Bacteria</taxon>
        <taxon>Pseudomonadati</taxon>
        <taxon>Campylobacterota</taxon>
        <taxon>Epsilonproteobacteria</taxon>
        <taxon>Campylobacterales</taxon>
        <taxon>Campylobacteraceae</taxon>
        <taxon>Campylobacter</taxon>
    </lineage>
</organism>
<keyword id="KW-1185">Reference proteome</keyword>
<proteinExistence type="inferred from homology"/>